<protein>
    <recommendedName>
        <fullName evidence="2">Ribulose-phosphate 3-epimerase</fullName>
        <ecNumber evidence="2 3">5.1.3.1</ecNumber>
    </recommendedName>
    <alternativeName>
        <fullName>Pentose-5-phosphate 3-epimerase</fullName>
        <shortName>PPE</shortName>
    </alternativeName>
    <alternativeName>
        <fullName>R5P3E</fullName>
    </alternativeName>
</protein>
<gene>
    <name evidence="2" type="primary">rpe</name>
    <name type="synonym">dod</name>
    <name type="synonym">yhfD</name>
    <name type="ordered locus">b3386</name>
    <name type="ordered locus">JW3349</name>
</gene>
<comment type="function">
    <text evidence="2 3">Catalyzes the reversible epimerization of D-ribulose 5-phosphate to D-xylulose 5-phosphate.</text>
</comment>
<comment type="catalytic activity">
    <reaction evidence="2 3">
        <text>D-ribulose 5-phosphate = D-xylulose 5-phosphate</text>
        <dbReference type="Rhea" id="RHEA:13677"/>
        <dbReference type="ChEBI" id="CHEBI:57737"/>
        <dbReference type="ChEBI" id="CHEBI:58121"/>
        <dbReference type="EC" id="5.1.3.1"/>
    </reaction>
</comment>
<comment type="cofactor">
    <cofactor evidence="3">
        <name>Co(2+)</name>
        <dbReference type="ChEBI" id="CHEBI:48828"/>
    </cofactor>
    <cofactor evidence="3">
        <name>Fe(2+)</name>
        <dbReference type="ChEBI" id="CHEBI:29033"/>
    </cofactor>
    <cofactor evidence="3">
        <name>Mn(2+)</name>
        <dbReference type="ChEBI" id="CHEBI:29035"/>
    </cofactor>
    <cofactor evidence="3">
        <name>Zn(2+)</name>
        <dbReference type="ChEBI" id="CHEBI:29105"/>
    </cofactor>
    <text evidence="3">Binds 1 divalent metal cation per subunit. Active with Co(2+), Fe(2+), Mn(2+) and Zn(2+).</text>
</comment>
<comment type="pathway">
    <text evidence="2 3">Carbohydrate degradation.</text>
</comment>
<comment type="interaction">
    <interactant intactId="EBI-546020">
        <id>P0AG07</id>
    </interactant>
    <interactant intactId="EBI-542385">
        <id>P0A988</id>
        <label>dnaN</label>
    </interactant>
    <organismsDiffer>false</organismsDiffer>
    <experiments>4</experiments>
</comment>
<comment type="interaction">
    <interactant intactId="EBI-546020">
        <id>P0AG07</id>
    </interactant>
    <interactant intactId="EBI-368855">
        <id>P0A6P9</id>
        <label>eno</label>
    </interactant>
    <organismsDiffer>false</organismsDiffer>
    <experiments>3</experiments>
</comment>
<comment type="interaction">
    <interactant intactId="EBI-546020">
        <id>P0AG07</id>
    </interactant>
    <interactant intactId="EBI-562037">
        <id>P45543</id>
        <label>frlD</label>
    </interactant>
    <organismsDiffer>false</organismsDiffer>
    <experiments>5</experiments>
</comment>
<comment type="similarity">
    <text evidence="2 4">Belongs to the ribulose-phosphate 3-epimerase family.</text>
</comment>
<keyword id="KW-0119">Carbohydrate metabolism</keyword>
<keyword id="KW-0170">Cobalt</keyword>
<keyword id="KW-0408">Iron</keyword>
<keyword id="KW-0413">Isomerase</keyword>
<keyword id="KW-0464">Manganese</keyword>
<keyword id="KW-0479">Metal-binding</keyword>
<keyword id="KW-1185">Reference proteome</keyword>
<keyword id="KW-0862">Zinc</keyword>
<organism>
    <name type="scientific">Escherichia coli (strain K12)</name>
    <dbReference type="NCBI Taxonomy" id="83333"/>
    <lineage>
        <taxon>Bacteria</taxon>
        <taxon>Pseudomonadati</taxon>
        <taxon>Pseudomonadota</taxon>
        <taxon>Gammaproteobacteria</taxon>
        <taxon>Enterobacterales</taxon>
        <taxon>Enterobacteriaceae</taxon>
        <taxon>Escherichia</taxon>
    </lineage>
</organism>
<accession>P0AG07</accession>
<accession>P32661</accession>
<accession>Q2M751</accession>
<proteinExistence type="evidence at protein level"/>
<feature type="chain" id="PRO_0000171568" description="Ribulose-phosphate 3-epimerase">
    <location>
        <begin position="1"/>
        <end position="225"/>
    </location>
</feature>
<feature type="active site" description="Proton acceptor" evidence="1 2">
    <location>
        <position position="36"/>
    </location>
</feature>
<feature type="active site" description="Proton donor" evidence="1 2">
    <location>
        <position position="177"/>
    </location>
</feature>
<feature type="binding site" evidence="1 2">
    <location>
        <position position="9"/>
    </location>
    <ligand>
        <name>substrate</name>
    </ligand>
</feature>
<feature type="binding site" evidence="1 2">
    <location>
        <position position="34"/>
    </location>
    <ligand>
        <name>a divalent metal cation</name>
        <dbReference type="ChEBI" id="CHEBI:60240"/>
    </ligand>
</feature>
<feature type="binding site" evidence="1 2">
    <location>
        <position position="36"/>
    </location>
    <ligand>
        <name>a divalent metal cation</name>
        <dbReference type="ChEBI" id="CHEBI:60240"/>
    </ligand>
</feature>
<feature type="binding site" evidence="1 2">
    <location>
        <position position="68"/>
    </location>
    <ligand>
        <name>a divalent metal cation</name>
        <dbReference type="ChEBI" id="CHEBI:60240"/>
    </ligand>
</feature>
<feature type="binding site" evidence="1 2">
    <location>
        <position position="68"/>
    </location>
    <ligand>
        <name>substrate</name>
    </ligand>
</feature>
<feature type="binding site" evidence="1 2">
    <location>
        <begin position="144"/>
        <end position="147"/>
    </location>
    <ligand>
        <name>substrate</name>
    </ligand>
</feature>
<feature type="binding site" evidence="1 2">
    <location>
        <begin position="177"/>
        <end position="179"/>
    </location>
    <ligand>
        <name>substrate</name>
    </ligand>
</feature>
<feature type="binding site" evidence="1 2">
    <location>
        <position position="177"/>
    </location>
    <ligand>
        <name>a divalent metal cation</name>
        <dbReference type="ChEBI" id="CHEBI:60240"/>
    </ligand>
</feature>
<feature type="binding site" evidence="1 2">
    <location>
        <begin position="199"/>
        <end position="200"/>
    </location>
    <ligand>
        <name>substrate</name>
    </ligand>
</feature>
<feature type="sequence conflict" description="In Ref. 1; CAA79663." evidence="4" ref="1">
    <original>FDQPDYKKVIDEMRSELAKVSHE</original>
    <variation>LTSQTTKKSTMKCAVNWQR</variation>
    <location>
        <begin position="203"/>
        <end position="225"/>
    </location>
</feature>
<dbReference type="EC" id="5.1.3.1" evidence="2 3"/>
<dbReference type="EMBL" id="Z19601">
    <property type="protein sequence ID" value="CAA79663.1"/>
    <property type="molecule type" value="Genomic_DNA"/>
</dbReference>
<dbReference type="EMBL" id="U18997">
    <property type="protein sequence ID" value="AAA58183.1"/>
    <property type="molecule type" value="Genomic_DNA"/>
</dbReference>
<dbReference type="EMBL" id="U00096">
    <property type="protein sequence ID" value="AAC76411.1"/>
    <property type="molecule type" value="Genomic_DNA"/>
</dbReference>
<dbReference type="EMBL" id="AP009048">
    <property type="protein sequence ID" value="BAE77905.1"/>
    <property type="molecule type" value="Genomic_DNA"/>
</dbReference>
<dbReference type="PIR" id="E65133">
    <property type="entry name" value="E65133"/>
</dbReference>
<dbReference type="RefSeq" id="NP_417845.1">
    <property type="nucleotide sequence ID" value="NC_000913.3"/>
</dbReference>
<dbReference type="RefSeq" id="WP_000816280.1">
    <property type="nucleotide sequence ID" value="NZ_STEB01000004.1"/>
</dbReference>
<dbReference type="SMR" id="P0AG07"/>
<dbReference type="BioGRID" id="4259295">
    <property type="interactions" value="203"/>
</dbReference>
<dbReference type="BioGRID" id="852205">
    <property type="interactions" value="2"/>
</dbReference>
<dbReference type="DIP" id="DIP-47869N"/>
<dbReference type="FunCoup" id="P0AG07">
    <property type="interactions" value="883"/>
</dbReference>
<dbReference type="IntAct" id="P0AG07">
    <property type="interactions" value="24"/>
</dbReference>
<dbReference type="STRING" id="511145.b3386"/>
<dbReference type="jPOST" id="P0AG07"/>
<dbReference type="PaxDb" id="511145-b3386"/>
<dbReference type="EnsemblBacteria" id="AAC76411">
    <property type="protein sequence ID" value="AAC76411"/>
    <property type="gene ID" value="b3386"/>
</dbReference>
<dbReference type="GeneID" id="93778612"/>
<dbReference type="GeneID" id="947896"/>
<dbReference type="KEGG" id="ecj:JW3349"/>
<dbReference type="KEGG" id="eco:b3386"/>
<dbReference type="KEGG" id="ecoc:C3026_18375"/>
<dbReference type="PATRIC" id="fig|1411691.4.peg.3344"/>
<dbReference type="EchoBASE" id="EB1903"/>
<dbReference type="eggNOG" id="COG0036">
    <property type="taxonomic scope" value="Bacteria"/>
</dbReference>
<dbReference type="HOGENOM" id="CLU_054856_2_1_6"/>
<dbReference type="InParanoid" id="P0AG07"/>
<dbReference type="OMA" id="CHLMIED"/>
<dbReference type="OrthoDB" id="1645589at2"/>
<dbReference type="PhylomeDB" id="P0AG07"/>
<dbReference type="BioCyc" id="EcoCyc:RIBULP3EPIM-MONOMER"/>
<dbReference type="BioCyc" id="MetaCyc:RIBULP3EPIM-MONOMER"/>
<dbReference type="PRO" id="PR:P0AG07"/>
<dbReference type="Proteomes" id="UP000000625">
    <property type="component" value="Chromosome"/>
</dbReference>
<dbReference type="GO" id="GO:0005829">
    <property type="term" value="C:cytosol"/>
    <property type="evidence" value="ECO:0000314"/>
    <property type="project" value="EcoCyc"/>
</dbReference>
<dbReference type="GO" id="GO:0004750">
    <property type="term" value="F:D-ribulose-phosphate 3-epimerase activity"/>
    <property type="evidence" value="ECO:0000314"/>
    <property type="project" value="EcoCyc"/>
</dbReference>
<dbReference type="GO" id="GO:0008198">
    <property type="term" value="F:ferrous iron binding"/>
    <property type="evidence" value="ECO:0000314"/>
    <property type="project" value="EcoCyc"/>
</dbReference>
<dbReference type="GO" id="GO:0046872">
    <property type="term" value="F:metal ion binding"/>
    <property type="evidence" value="ECO:0000318"/>
    <property type="project" value="GO_Central"/>
</dbReference>
<dbReference type="GO" id="GO:0005975">
    <property type="term" value="P:carbohydrate metabolic process"/>
    <property type="evidence" value="ECO:0000318"/>
    <property type="project" value="GO_Central"/>
</dbReference>
<dbReference type="GO" id="GO:0019323">
    <property type="term" value="P:pentose catabolic process"/>
    <property type="evidence" value="ECO:0000315"/>
    <property type="project" value="EcoCyc"/>
</dbReference>
<dbReference type="GO" id="GO:0009052">
    <property type="term" value="P:pentose-phosphate shunt, non-oxidative branch"/>
    <property type="evidence" value="ECO:0000269"/>
    <property type="project" value="EcoCyc"/>
</dbReference>
<dbReference type="CDD" id="cd00429">
    <property type="entry name" value="RPE"/>
    <property type="match status" value="1"/>
</dbReference>
<dbReference type="FunFam" id="3.20.20.70:FF:000004">
    <property type="entry name" value="Ribulose-phosphate 3-epimerase"/>
    <property type="match status" value="1"/>
</dbReference>
<dbReference type="Gene3D" id="3.20.20.70">
    <property type="entry name" value="Aldolase class I"/>
    <property type="match status" value="1"/>
</dbReference>
<dbReference type="HAMAP" id="MF_02227">
    <property type="entry name" value="RPE"/>
    <property type="match status" value="1"/>
</dbReference>
<dbReference type="InterPro" id="IPR013785">
    <property type="entry name" value="Aldolase_TIM"/>
</dbReference>
<dbReference type="InterPro" id="IPR026019">
    <property type="entry name" value="Ribul_P_3_epim"/>
</dbReference>
<dbReference type="InterPro" id="IPR000056">
    <property type="entry name" value="Ribul_P_3_epim-like"/>
</dbReference>
<dbReference type="InterPro" id="IPR011060">
    <property type="entry name" value="RibuloseP-bd_barrel"/>
</dbReference>
<dbReference type="NCBIfam" id="NF004076">
    <property type="entry name" value="PRK05581.1-4"/>
    <property type="match status" value="1"/>
</dbReference>
<dbReference type="NCBIfam" id="TIGR01163">
    <property type="entry name" value="rpe"/>
    <property type="match status" value="1"/>
</dbReference>
<dbReference type="PANTHER" id="PTHR11749">
    <property type="entry name" value="RIBULOSE-5-PHOSPHATE-3-EPIMERASE"/>
    <property type="match status" value="1"/>
</dbReference>
<dbReference type="Pfam" id="PF00834">
    <property type="entry name" value="Ribul_P_3_epim"/>
    <property type="match status" value="1"/>
</dbReference>
<dbReference type="PIRSF" id="PIRSF001461">
    <property type="entry name" value="RPE"/>
    <property type="match status" value="1"/>
</dbReference>
<dbReference type="SUPFAM" id="SSF51366">
    <property type="entry name" value="Ribulose-phoshate binding barrel"/>
    <property type="match status" value="1"/>
</dbReference>
<dbReference type="PROSITE" id="PS01085">
    <property type="entry name" value="RIBUL_P_3_EPIMER_1"/>
    <property type="match status" value="1"/>
</dbReference>
<dbReference type="PROSITE" id="PS01086">
    <property type="entry name" value="RIBUL_P_3_EPIMER_2"/>
    <property type="match status" value="1"/>
</dbReference>
<evidence type="ECO:0000250" key="1">
    <source>
        <dbReference type="UniProtKB" id="P32719"/>
    </source>
</evidence>
<evidence type="ECO:0000255" key="2">
    <source>
        <dbReference type="HAMAP-Rule" id="MF_02227"/>
    </source>
</evidence>
<evidence type="ECO:0000269" key="3">
    <source>
    </source>
</evidence>
<evidence type="ECO:0000305" key="4"/>
<name>RPE_ECOLI</name>
<sequence length="225" mass="24554">MKQYLIAPSILSADFARLGEDTAKALAAGADVVHFDVMDNHYVPNLTIGPMVLKSLRNYGITAPIDVHLMVKPVDRIVPDFAAAGASIITFHPEASEHVDRTLQLIKENGCKAGLVFNPATPLSYLDYVMDKLDVILLMSVNPGFGGQSFIPQTLDKLREVRRRIDESGFDIRLEVDGGVKVNNIGEIAAAGADMFVAGSAIFDQPDYKKVIDEMRSELAKVSHE</sequence>
<reference key="1">
    <citation type="journal article" date="1995" name="Mol. Gen. Genet.">
        <title>Characterization of three genes in the dam-containing operon of Escherichia coli.</title>
        <authorList>
            <person name="Lyngstadaas A."/>
            <person name="Lobner-Olesen A."/>
            <person name="Boye E."/>
        </authorList>
    </citation>
    <scope>NUCLEOTIDE SEQUENCE [GENOMIC DNA]</scope>
    <scope>CHARACTERIZATION</scope>
</reference>
<reference key="2">
    <citation type="journal article" date="1997" name="Science">
        <title>The complete genome sequence of Escherichia coli K-12.</title>
        <authorList>
            <person name="Blattner F.R."/>
            <person name="Plunkett G. III"/>
            <person name="Bloch C.A."/>
            <person name="Perna N.T."/>
            <person name="Burland V."/>
            <person name="Riley M."/>
            <person name="Collado-Vides J."/>
            <person name="Glasner J.D."/>
            <person name="Rode C.K."/>
            <person name="Mayhew G.F."/>
            <person name="Gregor J."/>
            <person name="Davis N.W."/>
            <person name="Kirkpatrick H.A."/>
            <person name="Goeden M.A."/>
            <person name="Rose D.J."/>
            <person name="Mau B."/>
            <person name="Shao Y."/>
        </authorList>
    </citation>
    <scope>NUCLEOTIDE SEQUENCE [LARGE SCALE GENOMIC DNA]</scope>
    <source>
        <strain>K12 / MG1655 / ATCC 47076</strain>
    </source>
</reference>
<reference key="3">
    <citation type="journal article" date="2006" name="Mol. Syst. Biol.">
        <title>Highly accurate genome sequences of Escherichia coli K-12 strains MG1655 and W3110.</title>
        <authorList>
            <person name="Hayashi K."/>
            <person name="Morooka N."/>
            <person name="Yamamoto Y."/>
            <person name="Fujita K."/>
            <person name="Isono K."/>
            <person name="Choi S."/>
            <person name="Ohtsubo E."/>
            <person name="Baba T."/>
            <person name="Wanner B.L."/>
            <person name="Mori H."/>
            <person name="Horiuchi T."/>
        </authorList>
    </citation>
    <scope>NUCLEOTIDE SEQUENCE [LARGE SCALE GENOMIC DNA]</scope>
    <source>
        <strain>K12 / W3110 / ATCC 27325 / DSM 5911</strain>
    </source>
</reference>
<reference key="4">
    <citation type="journal article" date="2011" name="Proc. Natl. Acad. Sci. U.S.A.">
        <title>Iron enzyme ribulose-5-phosphate 3-epimerase in Escherichia coli is rapidly damaged by hydrogen peroxide but can be protected by manganese.</title>
        <authorList>
            <person name="Sobota J.M."/>
            <person name="Imlay J.A."/>
        </authorList>
    </citation>
    <scope>CATALYTIC ACTIVITY</scope>
    <scope>FUNCTION</scope>
    <scope>COFACTOR</scope>
</reference>